<name>Y3180_HALMA</name>
<evidence type="ECO:0000255" key="1">
    <source>
        <dbReference type="HAMAP-Rule" id="MF_00026"/>
    </source>
</evidence>
<evidence type="ECO:0000256" key="2">
    <source>
        <dbReference type="SAM" id="MobiDB-lite"/>
    </source>
</evidence>
<protein>
    <recommendedName>
        <fullName evidence="1">DNA-binding protein rrnAC3180</fullName>
    </recommendedName>
</protein>
<feature type="chain" id="PRO_0000121552" description="DNA-binding protein rrnAC3180">
    <location>
        <begin position="1"/>
        <end position="114"/>
    </location>
</feature>
<feature type="region of interest" description="Disordered" evidence="2">
    <location>
        <begin position="1"/>
        <end position="45"/>
    </location>
</feature>
<feature type="compositionally biased region" description="Acidic residues" evidence="2">
    <location>
        <begin position="1"/>
        <end position="11"/>
    </location>
</feature>
<feature type="compositionally biased region" description="Basic and acidic residues" evidence="2">
    <location>
        <begin position="12"/>
        <end position="22"/>
    </location>
</feature>
<feature type="compositionally biased region" description="Low complexity" evidence="2">
    <location>
        <begin position="32"/>
        <end position="45"/>
    </location>
</feature>
<comment type="similarity">
    <text evidence="1">Belongs to the PDCD5 family.</text>
</comment>
<accession>Q5UXW7</accession>
<proteinExistence type="inferred from homology"/>
<reference key="1">
    <citation type="journal article" date="2004" name="Genome Res.">
        <title>Genome sequence of Haloarcula marismortui: a halophilic archaeon from the Dead Sea.</title>
        <authorList>
            <person name="Baliga N.S."/>
            <person name="Bonneau R."/>
            <person name="Facciotti M.T."/>
            <person name="Pan M."/>
            <person name="Glusman G."/>
            <person name="Deutsch E.W."/>
            <person name="Shannon P."/>
            <person name="Chiu Y."/>
            <person name="Weng R.S."/>
            <person name="Gan R.R."/>
            <person name="Hung P."/>
            <person name="Date S.V."/>
            <person name="Marcotte E."/>
            <person name="Hood L."/>
            <person name="Ng W.V."/>
        </authorList>
    </citation>
    <scope>NUCLEOTIDE SEQUENCE [LARGE SCALE GENOMIC DNA]</scope>
    <source>
        <strain>ATCC 43049 / DSM 3752 / JCM 8966 / VKM B-1809</strain>
    </source>
</reference>
<organism>
    <name type="scientific">Haloarcula marismortui (strain ATCC 43049 / DSM 3752 / JCM 8966 / VKM B-1809)</name>
    <name type="common">Halobacterium marismortui</name>
    <dbReference type="NCBI Taxonomy" id="272569"/>
    <lineage>
        <taxon>Archaea</taxon>
        <taxon>Methanobacteriati</taxon>
        <taxon>Methanobacteriota</taxon>
        <taxon>Stenosarchaea group</taxon>
        <taxon>Halobacteria</taxon>
        <taxon>Halobacteriales</taxon>
        <taxon>Haloarculaceae</taxon>
        <taxon>Haloarcula</taxon>
    </lineage>
</organism>
<dbReference type="EMBL" id="AY596297">
    <property type="protein sequence ID" value="AAV47886.1"/>
    <property type="molecule type" value="Genomic_DNA"/>
</dbReference>
<dbReference type="RefSeq" id="WP_004518409.1">
    <property type="nucleotide sequence ID" value="NZ_CP039138.1"/>
</dbReference>
<dbReference type="SMR" id="Q5UXW7"/>
<dbReference type="STRING" id="272569.rrnAC3180"/>
<dbReference type="PaxDb" id="272569-rrnAC3180"/>
<dbReference type="EnsemblBacteria" id="AAV47886">
    <property type="protein sequence ID" value="AAV47886"/>
    <property type="gene ID" value="rrnAC3180"/>
</dbReference>
<dbReference type="KEGG" id="hma:rrnAC3180"/>
<dbReference type="PATRIC" id="fig|272569.17.peg.3720"/>
<dbReference type="eggNOG" id="arCOG04179">
    <property type="taxonomic scope" value="Archaea"/>
</dbReference>
<dbReference type="HOGENOM" id="CLU_122978_3_0_2"/>
<dbReference type="Proteomes" id="UP000001169">
    <property type="component" value="Chromosome I"/>
</dbReference>
<dbReference type="GO" id="GO:0005829">
    <property type="term" value="C:cytosol"/>
    <property type="evidence" value="ECO:0007669"/>
    <property type="project" value="TreeGrafter"/>
</dbReference>
<dbReference type="GO" id="GO:0003677">
    <property type="term" value="F:DNA binding"/>
    <property type="evidence" value="ECO:0007669"/>
    <property type="project" value="UniProtKB-UniRule"/>
</dbReference>
<dbReference type="Gene3D" id="1.10.8.140">
    <property type="entry name" value="PDCD5-like"/>
    <property type="match status" value="1"/>
</dbReference>
<dbReference type="HAMAP" id="MF_00026">
    <property type="entry name" value="dsDNA_bind"/>
    <property type="match status" value="1"/>
</dbReference>
<dbReference type="InterPro" id="IPR022889">
    <property type="entry name" value="DNA_bind_arc"/>
</dbReference>
<dbReference type="InterPro" id="IPR002836">
    <property type="entry name" value="PDCD5-like"/>
</dbReference>
<dbReference type="InterPro" id="IPR036883">
    <property type="entry name" value="PDCD5-like_sf"/>
</dbReference>
<dbReference type="NCBIfam" id="NF003268">
    <property type="entry name" value="PRK04239.1"/>
    <property type="match status" value="1"/>
</dbReference>
<dbReference type="PANTHER" id="PTHR10840">
    <property type="entry name" value="PROGRAMMED CELL DEATH PROTEIN 5"/>
    <property type="match status" value="1"/>
</dbReference>
<dbReference type="PANTHER" id="PTHR10840:SF0">
    <property type="entry name" value="PROGRAMMED CELL DEATH PROTEIN 5"/>
    <property type="match status" value="1"/>
</dbReference>
<dbReference type="Pfam" id="PF01984">
    <property type="entry name" value="dsDNA_bind"/>
    <property type="match status" value="1"/>
</dbReference>
<dbReference type="PIRSF" id="PIRSF015730">
    <property type="entry name" value="TFAR19"/>
    <property type="match status" value="1"/>
</dbReference>
<dbReference type="SUPFAM" id="SSF46950">
    <property type="entry name" value="Double-stranded DNA-binding domain"/>
    <property type="match status" value="1"/>
</dbReference>
<keyword id="KW-0238">DNA-binding</keyword>
<keyword id="KW-1185">Reference proteome</keyword>
<gene>
    <name type="ordered locus">rrnAC3180</name>
</gene>
<sequence>MSGDPSEEELEELRKKKMEQLKEQQGGEGEGQEAAQQQAEAQKQAVLKQNLTDGARKRLNTVKMSKPQVGEQIEQQVVALARSGRVQGQIDEDQMKELLSELTPDSKSFDIKRR</sequence>